<keyword id="KW-0030">Aminoacyl-tRNA synthetase</keyword>
<keyword id="KW-0067">ATP-binding</keyword>
<keyword id="KW-0963">Cytoplasm</keyword>
<keyword id="KW-0436">Ligase</keyword>
<keyword id="KW-0547">Nucleotide-binding</keyword>
<keyword id="KW-0648">Protein biosynthesis</keyword>
<keyword id="KW-1185">Reference proteome</keyword>
<comment type="function">
    <text evidence="1">Catalyzes the attachment of proline to tRNA(Pro) in a two-step reaction: proline is first activated by ATP to form Pro-AMP and then transferred to the acceptor end of tRNA(Pro).</text>
</comment>
<comment type="catalytic activity">
    <reaction evidence="1">
        <text>tRNA(Pro) + L-proline + ATP = L-prolyl-tRNA(Pro) + AMP + diphosphate</text>
        <dbReference type="Rhea" id="RHEA:14305"/>
        <dbReference type="Rhea" id="RHEA-COMP:9700"/>
        <dbReference type="Rhea" id="RHEA-COMP:9702"/>
        <dbReference type="ChEBI" id="CHEBI:30616"/>
        <dbReference type="ChEBI" id="CHEBI:33019"/>
        <dbReference type="ChEBI" id="CHEBI:60039"/>
        <dbReference type="ChEBI" id="CHEBI:78442"/>
        <dbReference type="ChEBI" id="CHEBI:78532"/>
        <dbReference type="ChEBI" id="CHEBI:456215"/>
        <dbReference type="EC" id="6.1.1.15"/>
    </reaction>
</comment>
<comment type="subunit">
    <text evidence="1">Homodimer.</text>
</comment>
<comment type="subcellular location">
    <subcellularLocation>
        <location evidence="1">Cytoplasm</location>
    </subcellularLocation>
</comment>
<comment type="similarity">
    <text evidence="1">Belongs to the class-II aminoacyl-tRNA synthetase family. ProS type 2 subfamily.</text>
</comment>
<evidence type="ECO:0000255" key="1">
    <source>
        <dbReference type="HAMAP-Rule" id="MF_01570"/>
    </source>
</evidence>
<protein>
    <recommendedName>
        <fullName evidence="1">Proline--tRNA ligase</fullName>
        <ecNumber evidence="1">6.1.1.15</ecNumber>
    </recommendedName>
    <alternativeName>
        <fullName evidence="1">Prolyl-tRNA synthetase</fullName>
        <shortName evidence="1">ProRS</shortName>
    </alternativeName>
</protein>
<organism>
    <name type="scientific">Maricaulis maris (strain MCS10)</name>
    <name type="common">Caulobacter maris</name>
    <dbReference type="NCBI Taxonomy" id="394221"/>
    <lineage>
        <taxon>Bacteria</taxon>
        <taxon>Pseudomonadati</taxon>
        <taxon>Pseudomonadota</taxon>
        <taxon>Alphaproteobacteria</taxon>
        <taxon>Maricaulales</taxon>
        <taxon>Maricaulaceae</taxon>
        <taxon>Maricaulis</taxon>
    </lineage>
</organism>
<name>SYP_MARMM</name>
<accession>Q0APX0</accession>
<sequence>MRLSRYFLPVLKETPSDAEIVSHQLMLRAGMIKQEAAGIYAWLPLGHRVLRKIEQIVREEQDRAGAVELLMPTIQSADLWRESGRYDDYGDEMLRITDRHDRDMLFGPTNEEMITDIFRSYCKSYKDVPKLLYHIQWKFRDERRPRFGVMRGREFLMKDAYSFDVDEAAARRSYNRMFVAYLNTFARLGLKAVPMQADTGPIGGDLSHEFIVLAETGESEVFCHADLVEMGAPGLDVDFDGDLQPLVDQRTALYAATEEMHQPEEFAAVPADRQLSARGIEVGHIFNFGTKYSEPMKATVQHQDGQPRPVHMGSYGVGVSRLLGAIIEAHHDEKGCIWPESVAPFGAGIINMRVGDEACDAACETAYQGLVKAGLDPLYDDTDSRAGAKFATADLIGLPYQLVVGPRGLKEGKIELKVRRTGETHEMSPEDAVSRLAEGAFSDV</sequence>
<proteinExistence type="inferred from homology"/>
<dbReference type="EC" id="6.1.1.15" evidence="1"/>
<dbReference type="EMBL" id="CP000449">
    <property type="protein sequence ID" value="ABI65667.1"/>
    <property type="molecule type" value="Genomic_DNA"/>
</dbReference>
<dbReference type="RefSeq" id="WP_011643314.1">
    <property type="nucleotide sequence ID" value="NC_008347.1"/>
</dbReference>
<dbReference type="SMR" id="Q0APX0"/>
<dbReference type="STRING" id="394221.Mmar10_1375"/>
<dbReference type="KEGG" id="mmr:Mmar10_1375"/>
<dbReference type="eggNOG" id="COG0442">
    <property type="taxonomic scope" value="Bacteria"/>
</dbReference>
<dbReference type="HOGENOM" id="CLU_016739_4_2_5"/>
<dbReference type="OrthoDB" id="9809052at2"/>
<dbReference type="Proteomes" id="UP000001964">
    <property type="component" value="Chromosome"/>
</dbReference>
<dbReference type="GO" id="GO:0005829">
    <property type="term" value="C:cytosol"/>
    <property type="evidence" value="ECO:0007669"/>
    <property type="project" value="TreeGrafter"/>
</dbReference>
<dbReference type="GO" id="GO:0005524">
    <property type="term" value="F:ATP binding"/>
    <property type="evidence" value="ECO:0007669"/>
    <property type="project" value="UniProtKB-UniRule"/>
</dbReference>
<dbReference type="GO" id="GO:0004827">
    <property type="term" value="F:proline-tRNA ligase activity"/>
    <property type="evidence" value="ECO:0007669"/>
    <property type="project" value="UniProtKB-UniRule"/>
</dbReference>
<dbReference type="GO" id="GO:0006433">
    <property type="term" value="P:prolyl-tRNA aminoacylation"/>
    <property type="evidence" value="ECO:0007669"/>
    <property type="project" value="UniProtKB-UniRule"/>
</dbReference>
<dbReference type="CDD" id="cd00861">
    <property type="entry name" value="ProRS_anticodon_short"/>
    <property type="match status" value="1"/>
</dbReference>
<dbReference type="CDD" id="cd00779">
    <property type="entry name" value="ProRS_core_prok"/>
    <property type="match status" value="1"/>
</dbReference>
<dbReference type="FunFam" id="3.30.930.10:FF:000042">
    <property type="entry name" value="probable proline--tRNA ligase, mitochondrial"/>
    <property type="match status" value="1"/>
</dbReference>
<dbReference type="FunFam" id="3.40.50.800:FF:000032">
    <property type="entry name" value="Proline--tRNA ligase"/>
    <property type="match status" value="1"/>
</dbReference>
<dbReference type="Gene3D" id="3.40.50.800">
    <property type="entry name" value="Anticodon-binding domain"/>
    <property type="match status" value="1"/>
</dbReference>
<dbReference type="Gene3D" id="3.30.930.10">
    <property type="entry name" value="Bira Bifunctional Protein, Domain 2"/>
    <property type="match status" value="1"/>
</dbReference>
<dbReference type="HAMAP" id="MF_01570">
    <property type="entry name" value="Pro_tRNA_synth_type2"/>
    <property type="match status" value="1"/>
</dbReference>
<dbReference type="InterPro" id="IPR002314">
    <property type="entry name" value="aa-tRNA-synt_IIb"/>
</dbReference>
<dbReference type="InterPro" id="IPR006195">
    <property type="entry name" value="aa-tRNA-synth_II"/>
</dbReference>
<dbReference type="InterPro" id="IPR045864">
    <property type="entry name" value="aa-tRNA-synth_II/BPL/LPL"/>
</dbReference>
<dbReference type="InterPro" id="IPR004154">
    <property type="entry name" value="Anticodon-bd"/>
</dbReference>
<dbReference type="InterPro" id="IPR036621">
    <property type="entry name" value="Anticodon-bd_dom_sf"/>
</dbReference>
<dbReference type="InterPro" id="IPR002316">
    <property type="entry name" value="Pro-tRNA-ligase_IIa"/>
</dbReference>
<dbReference type="InterPro" id="IPR004500">
    <property type="entry name" value="Pro-tRNA-synth_IIa_bac-type"/>
</dbReference>
<dbReference type="InterPro" id="IPR050062">
    <property type="entry name" value="Pro-tRNA_synthetase"/>
</dbReference>
<dbReference type="InterPro" id="IPR023716">
    <property type="entry name" value="Prolyl-tRNA_ligase_IIa_type2"/>
</dbReference>
<dbReference type="InterPro" id="IPR044140">
    <property type="entry name" value="ProRS_anticodon_short"/>
</dbReference>
<dbReference type="InterPro" id="IPR033730">
    <property type="entry name" value="ProRS_core_prok"/>
</dbReference>
<dbReference type="NCBIfam" id="NF008979">
    <property type="entry name" value="PRK12325.1"/>
    <property type="match status" value="1"/>
</dbReference>
<dbReference type="NCBIfam" id="TIGR00409">
    <property type="entry name" value="proS_fam_II"/>
    <property type="match status" value="1"/>
</dbReference>
<dbReference type="PANTHER" id="PTHR42753">
    <property type="entry name" value="MITOCHONDRIAL RIBOSOME PROTEIN L39/PROLYL-TRNA LIGASE FAMILY MEMBER"/>
    <property type="match status" value="1"/>
</dbReference>
<dbReference type="PANTHER" id="PTHR42753:SF2">
    <property type="entry name" value="PROLINE--TRNA LIGASE"/>
    <property type="match status" value="1"/>
</dbReference>
<dbReference type="Pfam" id="PF03129">
    <property type="entry name" value="HGTP_anticodon"/>
    <property type="match status" value="1"/>
</dbReference>
<dbReference type="Pfam" id="PF00587">
    <property type="entry name" value="tRNA-synt_2b"/>
    <property type="match status" value="1"/>
</dbReference>
<dbReference type="PRINTS" id="PR01046">
    <property type="entry name" value="TRNASYNTHPRO"/>
</dbReference>
<dbReference type="SUPFAM" id="SSF52954">
    <property type="entry name" value="Class II aaRS ABD-related"/>
    <property type="match status" value="1"/>
</dbReference>
<dbReference type="SUPFAM" id="SSF55681">
    <property type="entry name" value="Class II aaRS and biotin synthetases"/>
    <property type="match status" value="1"/>
</dbReference>
<dbReference type="PROSITE" id="PS50862">
    <property type="entry name" value="AA_TRNA_LIGASE_II"/>
    <property type="match status" value="1"/>
</dbReference>
<gene>
    <name evidence="1" type="primary">proS</name>
    <name type="ordered locus">Mmar10_1375</name>
</gene>
<reference key="1">
    <citation type="submission" date="2006-08" db="EMBL/GenBank/DDBJ databases">
        <title>Complete sequence of Maricaulis maris MCS10.</title>
        <authorList>
            <consortium name="US DOE Joint Genome Institute"/>
            <person name="Copeland A."/>
            <person name="Lucas S."/>
            <person name="Lapidus A."/>
            <person name="Barry K."/>
            <person name="Detter J.C."/>
            <person name="Glavina del Rio T."/>
            <person name="Hammon N."/>
            <person name="Israni S."/>
            <person name="Dalin E."/>
            <person name="Tice H."/>
            <person name="Pitluck S."/>
            <person name="Saunders E."/>
            <person name="Brettin T."/>
            <person name="Bruce D."/>
            <person name="Han C."/>
            <person name="Tapia R."/>
            <person name="Gilna P."/>
            <person name="Schmutz J."/>
            <person name="Larimer F."/>
            <person name="Land M."/>
            <person name="Hauser L."/>
            <person name="Kyrpides N."/>
            <person name="Mikhailova N."/>
            <person name="Viollier P."/>
            <person name="Stephens C."/>
            <person name="Richardson P."/>
        </authorList>
    </citation>
    <scope>NUCLEOTIDE SEQUENCE [LARGE SCALE GENOMIC DNA]</scope>
    <source>
        <strain>MCS10</strain>
    </source>
</reference>
<feature type="chain" id="PRO_0000288396" description="Proline--tRNA ligase">
    <location>
        <begin position="1"/>
        <end position="444"/>
    </location>
</feature>